<proteinExistence type="inferred from homology"/>
<evidence type="ECO:0000255" key="1">
    <source>
        <dbReference type="HAMAP-Rule" id="MF_01582"/>
    </source>
</evidence>
<feature type="chain" id="PRO_1000197565" description="Serine/threonine transporter SstT">
    <location>
        <begin position="1"/>
        <end position="409"/>
    </location>
</feature>
<feature type="transmembrane region" description="Helical" evidence="1">
    <location>
        <begin position="14"/>
        <end position="34"/>
    </location>
</feature>
<feature type="transmembrane region" description="Helical" evidence="1">
    <location>
        <begin position="48"/>
        <end position="68"/>
    </location>
</feature>
<feature type="transmembrane region" description="Helical" evidence="1">
    <location>
        <begin position="82"/>
        <end position="102"/>
    </location>
</feature>
<feature type="transmembrane region" description="Helical" evidence="1">
    <location>
        <begin position="141"/>
        <end position="161"/>
    </location>
</feature>
<feature type="transmembrane region" description="Helical" evidence="1">
    <location>
        <begin position="192"/>
        <end position="212"/>
    </location>
</feature>
<feature type="transmembrane region" description="Helical" evidence="1">
    <location>
        <begin position="216"/>
        <end position="236"/>
    </location>
</feature>
<feature type="transmembrane region" description="Helical" evidence="1">
    <location>
        <begin position="290"/>
        <end position="310"/>
    </location>
</feature>
<feature type="transmembrane region" description="Helical" evidence="1">
    <location>
        <begin position="322"/>
        <end position="342"/>
    </location>
</feature>
<feature type="transmembrane region" description="Helical" evidence="1">
    <location>
        <begin position="357"/>
        <end position="377"/>
    </location>
</feature>
<name>SSTT_SHEWM</name>
<reference key="1">
    <citation type="submission" date="2008-02" db="EMBL/GenBank/DDBJ databases">
        <title>Complete sequence of Shewanella woodyi ATCC 51908.</title>
        <authorList>
            <consortium name="US DOE Joint Genome Institute"/>
            <person name="Copeland A."/>
            <person name="Lucas S."/>
            <person name="Lapidus A."/>
            <person name="Glavina del Rio T."/>
            <person name="Dalin E."/>
            <person name="Tice H."/>
            <person name="Bruce D."/>
            <person name="Goodwin L."/>
            <person name="Pitluck S."/>
            <person name="Sims D."/>
            <person name="Brettin T."/>
            <person name="Detter J.C."/>
            <person name="Han C."/>
            <person name="Kuske C.R."/>
            <person name="Schmutz J."/>
            <person name="Larimer F."/>
            <person name="Land M."/>
            <person name="Hauser L."/>
            <person name="Kyrpides N."/>
            <person name="Lykidis A."/>
            <person name="Zhao J.-S."/>
            <person name="Richardson P."/>
        </authorList>
    </citation>
    <scope>NUCLEOTIDE SEQUENCE [LARGE SCALE GENOMIC DNA]</scope>
    <source>
        <strain>ATCC 51908 / MS32</strain>
    </source>
</reference>
<sequence length="409" mass="42313">MNQNQSFLAKMANGSLVLQILVGIIAGIIVATLSESAAQSVAFLGQLFVGALKAIAPILVFILVAASIANQKKNAKTNMRPIVILYLFGTFAAAVTAVLMSFAFPTTLALTLDAAQASPPEGIGEVIHTLLFKLVDNPVNALMTGNYIGILAWGVGLGLALHHATDSTKQVFADVSHGVSQMVRFIIRLAPIGIFGLVSSTFASTGFSAIAGYMHLLLVLLGAMAIMALIINPAIVYFKIRRNPYPLVFTCIRESGVTAFFTRSSAANIPVNMALCEKLKLHEDTYSVSIPLGATINMGGAAITITILTLAAANTMGVQVDILTAILLSVVAGISACGASGVAGGSLLLIPLACSLFGISNDIAMQVVAVGFIIGVIQDSAETGLNSSTDVIFTAAACEAAERKENAGA</sequence>
<gene>
    <name evidence="1" type="primary">sstT</name>
    <name type="ordered locus">Swoo_1748</name>
</gene>
<protein>
    <recommendedName>
        <fullName evidence="1">Serine/threonine transporter SstT</fullName>
    </recommendedName>
    <alternativeName>
        <fullName evidence="1">Na(+)/serine-threonine symporter</fullName>
    </alternativeName>
</protein>
<comment type="function">
    <text evidence="1">Involved in the import of serine and threonine into the cell, with the concomitant import of sodium (symport system).</text>
</comment>
<comment type="catalytic activity">
    <reaction evidence="1">
        <text>L-serine(in) + Na(+)(in) = L-serine(out) + Na(+)(out)</text>
        <dbReference type="Rhea" id="RHEA:29575"/>
        <dbReference type="ChEBI" id="CHEBI:29101"/>
        <dbReference type="ChEBI" id="CHEBI:33384"/>
    </reaction>
    <physiologicalReaction direction="right-to-left" evidence="1">
        <dbReference type="Rhea" id="RHEA:29577"/>
    </physiologicalReaction>
</comment>
<comment type="catalytic activity">
    <reaction evidence="1">
        <text>L-threonine(in) + Na(+)(in) = L-threonine(out) + Na(+)(out)</text>
        <dbReference type="Rhea" id="RHEA:69999"/>
        <dbReference type="ChEBI" id="CHEBI:29101"/>
        <dbReference type="ChEBI" id="CHEBI:57926"/>
    </reaction>
    <physiologicalReaction direction="right-to-left" evidence="1">
        <dbReference type="Rhea" id="RHEA:70001"/>
    </physiologicalReaction>
</comment>
<comment type="subcellular location">
    <subcellularLocation>
        <location evidence="1">Cell inner membrane</location>
        <topology evidence="1">Multi-pass membrane protein</topology>
    </subcellularLocation>
</comment>
<comment type="similarity">
    <text evidence="1">Belongs to the dicarboxylate/amino acid:cation symporter (DAACS) (TC 2.A.23) family.</text>
</comment>
<organism>
    <name type="scientific">Shewanella woodyi (strain ATCC 51908 / MS32)</name>
    <dbReference type="NCBI Taxonomy" id="392500"/>
    <lineage>
        <taxon>Bacteria</taxon>
        <taxon>Pseudomonadati</taxon>
        <taxon>Pseudomonadota</taxon>
        <taxon>Gammaproteobacteria</taxon>
        <taxon>Alteromonadales</taxon>
        <taxon>Shewanellaceae</taxon>
        <taxon>Shewanella</taxon>
    </lineage>
</organism>
<keyword id="KW-0029">Amino-acid transport</keyword>
<keyword id="KW-0997">Cell inner membrane</keyword>
<keyword id="KW-1003">Cell membrane</keyword>
<keyword id="KW-0472">Membrane</keyword>
<keyword id="KW-1185">Reference proteome</keyword>
<keyword id="KW-0769">Symport</keyword>
<keyword id="KW-0812">Transmembrane</keyword>
<keyword id="KW-1133">Transmembrane helix</keyword>
<keyword id="KW-0813">Transport</keyword>
<dbReference type="EMBL" id="CP000961">
    <property type="protein sequence ID" value="ACA86033.1"/>
    <property type="molecule type" value="Genomic_DNA"/>
</dbReference>
<dbReference type="RefSeq" id="WP_012324379.1">
    <property type="nucleotide sequence ID" value="NC_010506.1"/>
</dbReference>
<dbReference type="SMR" id="B1KNF6"/>
<dbReference type="STRING" id="392500.Swoo_1748"/>
<dbReference type="KEGG" id="swd:Swoo_1748"/>
<dbReference type="eggNOG" id="COG3633">
    <property type="taxonomic scope" value="Bacteria"/>
</dbReference>
<dbReference type="HOGENOM" id="CLU_044581_0_0_6"/>
<dbReference type="Proteomes" id="UP000002168">
    <property type="component" value="Chromosome"/>
</dbReference>
<dbReference type="GO" id="GO:0005886">
    <property type="term" value="C:plasma membrane"/>
    <property type="evidence" value="ECO:0007669"/>
    <property type="project" value="UniProtKB-SubCell"/>
</dbReference>
<dbReference type="GO" id="GO:0005295">
    <property type="term" value="F:neutral L-amino acid:sodium symporter activity"/>
    <property type="evidence" value="ECO:0007669"/>
    <property type="project" value="TreeGrafter"/>
</dbReference>
<dbReference type="GO" id="GO:0032329">
    <property type="term" value="P:serine transport"/>
    <property type="evidence" value="ECO:0007669"/>
    <property type="project" value="InterPro"/>
</dbReference>
<dbReference type="GO" id="GO:0015826">
    <property type="term" value="P:threonine transport"/>
    <property type="evidence" value="ECO:0007669"/>
    <property type="project" value="InterPro"/>
</dbReference>
<dbReference type="FunFam" id="1.10.3860.10:FF:000003">
    <property type="entry name" value="Serine/threonine transporter sstT"/>
    <property type="match status" value="1"/>
</dbReference>
<dbReference type="Gene3D" id="1.10.3860.10">
    <property type="entry name" value="Sodium:dicarboxylate symporter"/>
    <property type="match status" value="1"/>
</dbReference>
<dbReference type="HAMAP" id="MF_01582">
    <property type="entry name" value="Ser_Thr_transp_SstT"/>
    <property type="match status" value="1"/>
</dbReference>
<dbReference type="InterPro" id="IPR001991">
    <property type="entry name" value="Na-dicarboxylate_symporter"/>
</dbReference>
<dbReference type="InterPro" id="IPR036458">
    <property type="entry name" value="Na:dicarbo_symporter_sf"/>
</dbReference>
<dbReference type="InterPro" id="IPR023025">
    <property type="entry name" value="Ser_Thr_transp_SstT"/>
</dbReference>
<dbReference type="NCBIfam" id="NF010151">
    <property type="entry name" value="PRK13628.1"/>
    <property type="match status" value="1"/>
</dbReference>
<dbReference type="PANTHER" id="PTHR42865">
    <property type="entry name" value="PROTON/GLUTAMATE-ASPARTATE SYMPORTER"/>
    <property type="match status" value="1"/>
</dbReference>
<dbReference type="PANTHER" id="PTHR42865:SF8">
    <property type="entry name" value="SERINE_THREONINE TRANSPORTER SSTT"/>
    <property type="match status" value="1"/>
</dbReference>
<dbReference type="Pfam" id="PF00375">
    <property type="entry name" value="SDF"/>
    <property type="match status" value="1"/>
</dbReference>
<dbReference type="PRINTS" id="PR00173">
    <property type="entry name" value="EDTRNSPORT"/>
</dbReference>
<dbReference type="SUPFAM" id="SSF118215">
    <property type="entry name" value="Proton glutamate symport protein"/>
    <property type="match status" value="1"/>
</dbReference>
<accession>B1KNF6</accession>